<organism>
    <name type="scientific">Burkholderia cenocepacia (strain ATCC BAA-245 / DSM 16553 / LMG 16656 / NCTC 13227 / J2315 / CF5610)</name>
    <name type="common">Burkholderia cepacia (strain J2315)</name>
    <dbReference type="NCBI Taxonomy" id="216591"/>
    <lineage>
        <taxon>Bacteria</taxon>
        <taxon>Pseudomonadati</taxon>
        <taxon>Pseudomonadota</taxon>
        <taxon>Betaproteobacteria</taxon>
        <taxon>Burkholderiales</taxon>
        <taxon>Burkholderiaceae</taxon>
        <taxon>Burkholderia</taxon>
        <taxon>Burkholderia cepacia complex</taxon>
    </lineage>
</organism>
<accession>B4E8Y7</accession>
<proteinExistence type="inferred from homology"/>
<sequence length="77" mass="8761">MARVCQVTGKAPMSGNNVSHANNKTKRRFLPNLQNRRFWVESENRWVRLRVSNAGLRLIDKNGIDSVLADLRARGEA</sequence>
<gene>
    <name evidence="1" type="primary">rpmB</name>
    <name type="ordered locus">BceJ2315_26530</name>
    <name type="ORF">BCAL2714</name>
</gene>
<name>RL28_BURCJ</name>
<feature type="chain" id="PRO_1000121596" description="Large ribosomal subunit protein bL28">
    <location>
        <begin position="1"/>
        <end position="77"/>
    </location>
</feature>
<feature type="region of interest" description="Disordered" evidence="2">
    <location>
        <begin position="1"/>
        <end position="25"/>
    </location>
</feature>
<comment type="similarity">
    <text evidence="1">Belongs to the bacterial ribosomal protein bL28 family.</text>
</comment>
<reference key="1">
    <citation type="journal article" date="2009" name="J. Bacteriol.">
        <title>The genome of Burkholderia cenocepacia J2315, an epidemic pathogen of cystic fibrosis patients.</title>
        <authorList>
            <person name="Holden M.T."/>
            <person name="Seth-Smith H.M."/>
            <person name="Crossman L.C."/>
            <person name="Sebaihia M."/>
            <person name="Bentley S.D."/>
            <person name="Cerdeno-Tarraga A.M."/>
            <person name="Thomson N.R."/>
            <person name="Bason N."/>
            <person name="Quail M.A."/>
            <person name="Sharp S."/>
            <person name="Cherevach I."/>
            <person name="Churcher C."/>
            <person name="Goodhead I."/>
            <person name="Hauser H."/>
            <person name="Holroyd N."/>
            <person name="Mungall K."/>
            <person name="Scott P."/>
            <person name="Walker D."/>
            <person name="White B."/>
            <person name="Rose H."/>
            <person name="Iversen P."/>
            <person name="Mil-Homens D."/>
            <person name="Rocha E.P."/>
            <person name="Fialho A.M."/>
            <person name="Baldwin A."/>
            <person name="Dowson C."/>
            <person name="Barrell B.G."/>
            <person name="Govan J.R."/>
            <person name="Vandamme P."/>
            <person name="Hart C.A."/>
            <person name="Mahenthiralingam E."/>
            <person name="Parkhill J."/>
        </authorList>
    </citation>
    <scope>NUCLEOTIDE SEQUENCE [LARGE SCALE GENOMIC DNA]</scope>
    <source>
        <strain>ATCC BAA-245 / DSM 16553 / LMG 16656 / NCTC 13227 / J2315 / CF5610</strain>
    </source>
</reference>
<protein>
    <recommendedName>
        <fullName evidence="1">Large ribosomal subunit protein bL28</fullName>
    </recommendedName>
    <alternativeName>
        <fullName evidence="3">50S ribosomal protein L28</fullName>
    </alternativeName>
</protein>
<dbReference type="EMBL" id="AM747720">
    <property type="protein sequence ID" value="CAR53015.1"/>
    <property type="molecule type" value="Genomic_DNA"/>
</dbReference>
<dbReference type="RefSeq" id="WP_004186391.1">
    <property type="nucleotide sequence ID" value="NC_011000.1"/>
</dbReference>
<dbReference type="SMR" id="B4E8Y7"/>
<dbReference type="GeneID" id="98107656"/>
<dbReference type="KEGG" id="bcj:BCAL2714"/>
<dbReference type="eggNOG" id="COG0227">
    <property type="taxonomic scope" value="Bacteria"/>
</dbReference>
<dbReference type="HOGENOM" id="CLU_064548_3_1_4"/>
<dbReference type="BioCyc" id="BCEN216591:G1G1V-3007-MONOMER"/>
<dbReference type="Proteomes" id="UP000001035">
    <property type="component" value="Chromosome 1"/>
</dbReference>
<dbReference type="GO" id="GO:0022625">
    <property type="term" value="C:cytosolic large ribosomal subunit"/>
    <property type="evidence" value="ECO:0007669"/>
    <property type="project" value="TreeGrafter"/>
</dbReference>
<dbReference type="GO" id="GO:0003735">
    <property type="term" value="F:structural constituent of ribosome"/>
    <property type="evidence" value="ECO:0007669"/>
    <property type="project" value="InterPro"/>
</dbReference>
<dbReference type="GO" id="GO:0006412">
    <property type="term" value="P:translation"/>
    <property type="evidence" value="ECO:0007669"/>
    <property type="project" value="UniProtKB-UniRule"/>
</dbReference>
<dbReference type="FunFam" id="2.30.170.40:FF:000001">
    <property type="entry name" value="50S ribosomal protein L28"/>
    <property type="match status" value="1"/>
</dbReference>
<dbReference type="Gene3D" id="2.30.170.40">
    <property type="entry name" value="Ribosomal protein L28/L24"/>
    <property type="match status" value="1"/>
</dbReference>
<dbReference type="HAMAP" id="MF_00373">
    <property type="entry name" value="Ribosomal_bL28"/>
    <property type="match status" value="1"/>
</dbReference>
<dbReference type="InterPro" id="IPR026569">
    <property type="entry name" value="Ribosomal_bL28"/>
</dbReference>
<dbReference type="InterPro" id="IPR034704">
    <property type="entry name" value="Ribosomal_bL28/bL31-like_sf"/>
</dbReference>
<dbReference type="InterPro" id="IPR001383">
    <property type="entry name" value="Ribosomal_bL28_bact-type"/>
</dbReference>
<dbReference type="InterPro" id="IPR037147">
    <property type="entry name" value="Ribosomal_bL28_sf"/>
</dbReference>
<dbReference type="NCBIfam" id="TIGR00009">
    <property type="entry name" value="L28"/>
    <property type="match status" value="1"/>
</dbReference>
<dbReference type="PANTHER" id="PTHR13528">
    <property type="entry name" value="39S RIBOSOMAL PROTEIN L28, MITOCHONDRIAL"/>
    <property type="match status" value="1"/>
</dbReference>
<dbReference type="PANTHER" id="PTHR13528:SF2">
    <property type="entry name" value="LARGE RIBOSOMAL SUBUNIT PROTEIN BL28M"/>
    <property type="match status" value="1"/>
</dbReference>
<dbReference type="Pfam" id="PF00830">
    <property type="entry name" value="Ribosomal_L28"/>
    <property type="match status" value="1"/>
</dbReference>
<dbReference type="SUPFAM" id="SSF143800">
    <property type="entry name" value="L28p-like"/>
    <property type="match status" value="1"/>
</dbReference>
<evidence type="ECO:0000255" key="1">
    <source>
        <dbReference type="HAMAP-Rule" id="MF_00373"/>
    </source>
</evidence>
<evidence type="ECO:0000256" key="2">
    <source>
        <dbReference type="SAM" id="MobiDB-lite"/>
    </source>
</evidence>
<evidence type="ECO:0000305" key="3"/>
<keyword id="KW-0687">Ribonucleoprotein</keyword>
<keyword id="KW-0689">Ribosomal protein</keyword>